<protein>
    <recommendedName>
        <fullName evidence="1">ATP synthase subunit beta</fullName>
        <ecNumber evidence="1">7.1.2.2</ecNumber>
    </recommendedName>
    <alternativeName>
        <fullName evidence="1">ATP synthase F1 sector subunit beta</fullName>
    </alternativeName>
    <alternativeName>
        <fullName evidence="1">F-ATPase subunit beta</fullName>
    </alternativeName>
</protein>
<keyword id="KW-0066">ATP synthesis</keyword>
<keyword id="KW-0067">ATP-binding</keyword>
<keyword id="KW-1003">Cell membrane</keyword>
<keyword id="KW-0139">CF(1)</keyword>
<keyword id="KW-0375">Hydrogen ion transport</keyword>
<keyword id="KW-0406">Ion transport</keyword>
<keyword id="KW-0472">Membrane</keyword>
<keyword id="KW-0547">Nucleotide-binding</keyword>
<keyword id="KW-1278">Translocase</keyword>
<keyword id="KW-0813">Transport</keyword>
<accession>Q042L5</accession>
<reference key="1">
    <citation type="journal article" date="2006" name="Proc. Natl. Acad. Sci. U.S.A.">
        <title>Comparative genomics of the lactic acid bacteria.</title>
        <authorList>
            <person name="Makarova K.S."/>
            <person name="Slesarev A."/>
            <person name="Wolf Y.I."/>
            <person name="Sorokin A."/>
            <person name="Mirkin B."/>
            <person name="Koonin E.V."/>
            <person name="Pavlov A."/>
            <person name="Pavlova N."/>
            <person name="Karamychev V."/>
            <person name="Polouchine N."/>
            <person name="Shakhova V."/>
            <person name="Grigoriev I."/>
            <person name="Lou Y."/>
            <person name="Rohksar D."/>
            <person name="Lucas S."/>
            <person name="Huang K."/>
            <person name="Goodstein D.M."/>
            <person name="Hawkins T."/>
            <person name="Plengvidhya V."/>
            <person name="Welker D."/>
            <person name="Hughes J."/>
            <person name="Goh Y."/>
            <person name="Benson A."/>
            <person name="Baldwin K."/>
            <person name="Lee J.-H."/>
            <person name="Diaz-Muniz I."/>
            <person name="Dosti B."/>
            <person name="Smeianov V."/>
            <person name="Wechter W."/>
            <person name="Barabote R."/>
            <person name="Lorca G."/>
            <person name="Altermann E."/>
            <person name="Barrangou R."/>
            <person name="Ganesan B."/>
            <person name="Xie Y."/>
            <person name="Rawsthorne H."/>
            <person name="Tamir D."/>
            <person name="Parker C."/>
            <person name="Breidt F."/>
            <person name="Broadbent J.R."/>
            <person name="Hutkins R."/>
            <person name="O'Sullivan D."/>
            <person name="Steele J."/>
            <person name="Unlu G."/>
            <person name="Saier M.H. Jr."/>
            <person name="Klaenhammer T."/>
            <person name="Richardson P."/>
            <person name="Kozyavkin S."/>
            <person name="Weimer B.C."/>
            <person name="Mills D.A."/>
        </authorList>
    </citation>
    <scope>NUCLEOTIDE SEQUENCE [LARGE SCALE GENOMIC DNA]</scope>
    <source>
        <strain>ATCC 33323 / DSM 20243 / BCRC 14619 / CIP 102991 / JCM 1131 / KCTC 3163 / NCIMB 11718 / NCTC 13722 / AM63</strain>
    </source>
</reference>
<name>ATPB_LACGA</name>
<evidence type="ECO:0000255" key="1">
    <source>
        <dbReference type="HAMAP-Rule" id="MF_01347"/>
    </source>
</evidence>
<sequence>MGKGEIVQVIGPVVDVEFPLDKDLPDINNALRVTNNNGDTLVLEVTLELGDGVLRTISMESTDGLRRGMEVEDTGAPISVPVGKDTLGRVFNVLGDPIDGGPALGKDVKREGIHKEAPKYDELSTSEEILETGIKVIDLLEPYVRGGKVGLFGGAGVGKTTIIQELIHNIAQEHGGISVFTGVGERTREGNDLYFEMKASGVLSKTAMVFGQMNEPPGARMRVALTGLTIAEYFRDVEGLDVLLFIDNIFRFTQAGSEVSALLGRMPSAVGYQPTLATEMGQLQERITSTKKGSITSIQAVYVPADDYTDPAPATTFAHLDATTNLERRLVEQGIYPAVDPLESTSSALDPEVVGEEHYQVAVQVQHILQRYQELQDIISVLGMDELSDDEKLIVERARKIQFFLSQNFFVAEQFTGLPGSYVPIKETIKGFKMIIDGKLDDLPEDAFRNVGPIEDVVKKAEKMGVTPKNPEAKAMLEAK</sequence>
<gene>
    <name evidence="1" type="primary">atpD</name>
    <name type="ordered locus">LGAS_1238</name>
</gene>
<dbReference type="EC" id="7.1.2.2" evidence="1"/>
<dbReference type="EMBL" id="CP000413">
    <property type="protein sequence ID" value="ABJ60607.1"/>
    <property type="molecule type" value="Genomic_DNA"/>
</dbReference>
<dbReference type="RefSeq" id="WP_003647072.1">
    <property type="nucleotide sequence ID" value="NZ_WBMG01000002.1"/>
</dbReference>
<dbReference type="SMR" id="Q042L5"/>
<dbReference type="GeneID" id="29639529"/>
<dbReference type="KEGG" id="lga:LGAS_1238"/>
<dbReference type="HOGENOM" id="CLU_022398_0_2_9"/>
<dbReference type="BioCyc" id="LGAS324831:G1G6Y-1234-MONOMER"/>
<dbReference type="Proteomes" id="UP000000664">
    <property type="component" value="Chromosome"/>
</dbReference>
<dbReference type="GO" id="GO:0005886">
    <property type="term" value="C:plasma membrane"/>
    <property type="evidence" value="ECO:0007669"/>
    <property type="project" value="UniProtKB-SubCell"/>
</dbReference>
<dbReference type="GO" id="GO:0045259">
    <property type="term" value="C:proton-transporting ATP synthase complex"/>
    <property type="evidence" value="ECO:0007669"/>
    <property type="project" value="UniProtKB-KW"/>
</dbReference>
<dbReference type="GO" id="GO:0005524">
    <property type="term" value="F:ATP binding"/>
    <property type="evidence" value="ECO:0007669"/>
    <property type="project" value="UniProtKB-UniRule"/>
</dbReference>
<dbReference type="GO" id="GO:0016887">
    <property type="term" value="F:ATP hydrolysis activity"/>
    <property type="evidence" value="ECO:0007669"/>
    <property type="project" value="InterPro"/>
</dbReference>
<dbReference type="GO" id="GO:0046933">
    <property type="term" value="F:proton-transporting ATP synthase activity, rotational mechanism"/>
    <property type="evidence" value="ECO:0007669"/>
    <property type="project" value="UniProtKB-UniRule"/>
</dbReference>
<dbReference type="CDD" id="cd18110">
    <property type="entry name" value="ATP-synt_F1_beta_C"/>
    <property type="match status" value="1"/>
</dbReference>
<dbReference type="CDD" id="cd18115">
    <property type="entry name" value="ATP-synt_F1_beta_N"/>
    <property type="match status" value="1"/>
</dbReference>
<dbReference type="CDD" id="cd01133">
    <property type="entry name" value="F1-ATPase_beta_CD"/>
    <property type="match status" value="1"/>
</dbReference>
<dbReference type="FunFam" id="1.10.1140.10:FF:000001">
    <property type="entry name" value="ATP synthase subunit beta"/>
    <property type="match status" value="1"/>
</dbReference>
<dbReference type="FunFam" id="2.40.10.170:FF:000005">
    <property type="entry name" value="ATP synthase subunit beta"/>
    <property type="match status" value="1"/>
</dbReference>
<dbReference type="FunFam" id="3.40.50.300:FF:000004">
    <property type="entry name" value="ATP synthase subunit beta"/>
    <property type="match status" value="1"/>
</dbReference>
<dbReference type="Gene3D" id="2.40.10.170">
    <property type="match status" value="1"/>
</dbReference>
<dbReference type="Gene3D" id="1.10.1140.10">
    <property type="entry name" value="Bovine Mitochondrial F1-atpase, Atp Synthase Beta Chain, Chain D, domain 3"/>
    <property type="match status" value="1"/>
</dbReference>
<dbReference type="Gene3D" id="3.40.50.300">
    <property type="entry name" value="P-loop containing nucleotide triphosphate hydrolases"/>
    <property type="match status" value="1"/>
</dbReference>
<dbReference type="HAMAP" id="MF_01347">
    <property type="entry name" value="ATP_synth_beta_bact"/>
    <property type="match status" value="1"/>
</dbReference>
<dbReference type="InterPro" id="IPR003593">
    <property type="entry name" value="AAA+_ATPase"/>
</dbReference>
<dbReference type="InterPro" id="IPR055190">
    <property type="entry name" value="ATP-synt_VA_C"/>
</dbReference>
<dbReference type="InterPro" id="IPR005722">
    <property type="entry name" value="ATP_synth_F1_bsu"/>
</dbReference>
<dbReference type="InterPro" id="IPR020003">
    <property type="entry name" value="ATPase_a/bsu_AS"/>
</dbReference>
<dbReference type="InterPro" id="IPR050053">
    <property type="entry name" value="ATPase_alpha/beta_chains"/>
</dbReference>
<dbReference type="InterPro" id="IPR004100">
    <property type="entry name" value="ATPase_F1/V1/A1_a/bsu_N"/>
</dbReference>
<dbReference type="InterPro" id="IPR036121">
    <property type="entry name" value="ATPase_F1/V1/A1_a/bsu_N_sf"/>
</dbReference>
<dbReference type="InterPro" id="IPR000194">
    <property type="entry name" value="ATPase_F1/V1/A1_a/bsu_nucl-bd"/>
</dbReference>
<dbReference type="InterPro" id="IPR024034">
    <property type="entry name" value="ATPase_F1/V1_b/a_C"/>
</dbReference>
<dbReference type="InterPro" id="IPR027417">
    <property type="entry name" value="P-loop_NTPase"/>
</dbReference>
<dbReference type="NCBIfam" id="TIGR01039">
    <property type="entry name" value="atpD"/>
    <property type="match status" value="1"/>
</dbReference>
<dbReference type="PANTHER" id="PTHR15184">
    <property type="entry name" value="ATP SYNTHASE"/>
    <property type="match status" value="1"/>
</dbReference>
<dbReference type="PANTHER" id="PTHR15184:SF71">
    <property type="entry name" value="ATP SYNTHASE SUBUNIT BETA, MITOCHONDRIAL"/>
    <property type="match status" value="1"/>
</dbReference>
<dbReference type="Pfam" id="PF00006">
    <property type="entry name" value="ATP-synt_ab"/>
    <property type="match status" value="1"/>
</dbReference>
<dbReference type="Pfam" id="PF02874">
    <property type="entry name" value="ATP-synt_ab_N"/>
    <property type="match status" value="1"/>
</dbReference>
<dbReference type="Pfam" id="PF22919">
    <property type="entry name" value="ATP-synt_VA_C"/>
    <property type="match status" value="1"/>
</dbReference>
<dbReference type="SMART" id="SM00382">
    <property type="entry name" value="AAA"/>
    <property type="match status" value="1"/>
</dbReference>
<dbReference type="SUPFAM" id="SSF47917">
    <property type="entry name" value="C-terminal domain of alpha and beta subunits of F1 ATP synthase"/>
    <property type="match status" value="1"/>
</dbReference>
<dbReference type="SUPFAM" id="SSF50615">
    <property type="entry name" value="N-terminal domain of alpha and beta subunits of F1 ATP synthase"/>
    <property type="match status" value="1"/>
</dbReference>
<dbReference type="SUPFAM" id="SSF52540">
    <property type="entry name" value="P-loop containing nucleoside triphosphate hydrolases"/>
    <property type="match status" value="1"/>
</dbReference>
<dbReference type="PROSITE" id="PS00152">
    <property type="entry name" value="ATPASE_ALPHA_BETA"/>
    <property type="match status" value="1"/>
</dbReference>
<proteinExistence type="inferred from homology"/>
<organism>
    <name type="scientific">Lactobacillus gasseri (strain ATCC 33323 / DSM 20243 / BCRC 14619 / CIP 102991 / JCM 1131 / KCTC 3163 / NCIMB 11718 / NCTC 13722 / AM63)</name>
    <dbReference type="NCBI Taxonomy" id="324831"/>
    <lineage>
        <taxon>Bacteria</taxon>
        <taxon>Bacillati</taxon>
        <taxon>Bacillota</taxon>
        <taxon>Bacilli</taxon>
        <taxon>Lactobacillales</taxon>
        <taxon>Lactobacillaceae</taxon>
        <taxon>Lactobacillus</taxon>
    </lineage>
</organism>
<comment type="function">
    <text evidence="1">Produces ATP from ADP in the presence of a proton gradient across the membrane. The catalytic sites are hosted primarily by the beta subunits.</text>
</comment>
<comment type="catalytic activity">
    <reaction evidence="1">
        <text>ATP + H2O + 4 H(+)(in) = ADP + phosphate + 5 H(+)(out)</text>
        <dbReference type="Rhea" id="RHEA:57720"/>
        <dbReference type="ChEBI" id="CHEBI:15377"/>
        <dbReference type="ChEBI" id="CHEBI:15378"/>
        <dbReference type="ChEBI" id="CHEBI:30616"/>
        <dbReference type="ChEBI" id="CHEBI:43474"/>
        <dbReference type="ChEBI" id="CHEBI:456216"/>
        <dbReference type="EC" id="7.1.2.2"/>
    </reaction>
</comment>
<comment type="subunit">
    <text evidence="1">F-type ATPases have 2 components, CF(1) - the catalytic core - and CF(0) - the membrane proton channel. CF(1) has five subunits: alpha(3), beta(3), gamma(1), delta(1), epsilon(1). CF(0) has three main subunits: a(1), b(2) and c(9-12). The alpha and beta chains form an alternating ring which encloses part of the gamma chain. CF(1) is attached to CF(0) by a central stalk formed by the gamma and epsilon chains, while a peripheral stalk is formed by the delta and b chains.</text>
</comment>
<comment type="subcellular location">
    <subcellularLocation>
        <location evidence="1">Cell membrane</location>
        <topology evidence="1">Peripheral membrane protein</topology>
    </subcellularLocation>
</comment>
<comment type="similarity">
    <text evidence="1">Belongs to the ATPase alpha/beta chains family.</text>
</comment>
<feature type="chain" id="PRO_1000055127" description="ATP synthase subunit beta">
    <location>
        <begin position="1"/>
        <end position="480"/>
    </location>
</feature>
<feature type="binding site" evidence="1">
    <location>
        <begin position="153"/>
        <end position="160"/>
    </location>
    <ligand>
        <name>ATP</name>
        <dbReference type="ChEBI" id="CHEBI:30616"/>
    </ligand>
</feature>